<name>KATG_PSEU2</name>
<dbReference type="EC" id="1.11.1.21" evidence="1"/>
<dbReference type="EMBL" id="CP000075">
    <property type="protein sequence ID" value="AAY39238.1"/>
    <property type="molecule type" value="Genomic_DNA"/>
</dbReference>
<dbReference type="RefSeq" id="WP_011268890.1">
    <property type="nucleotide sequence ID" value="NC_007005.1"/>
</dbReference>
<dbReference type="RefSeq" id="YP_237276.1">
    <property type="nucleotide sequence ID" value="NC_007005.1"/>
</dbReference>
<dbReference type="SMR" id="Q4ZNN4"/>
<dbReference type="STRING" id="205918.Psyr_4208"/>
<dbReference type="PeroxiBase" id="2312">
    <property type="entry name" value="PssCP01_B728a"/>
</dbReference>
<dbReference type="KEGG" id="psb:Psyr_4208"/>
<dbReference type="PATRIC" id="fig|205918.7.peg.4335"/>
<dbReference type="eggNOG" id="COG0376">
    <property type="taxonomic scope" value="Bacteria"/>
</dbReference>
<dbReference type="HOGENOM" id="CLU_025424_2_0_6"/>
<dbReference type="OrthoDB" id="9759743at2"/>
<dbReference type="Proteomes" id="UP000000426">
    <property type="component" value="Chromosome"/>
</dbReference>
<dbReference type="GO" id="GO:0005829">
    <property type="term" value="C:cytosol"/>
    <property type="evidence" value="ECO:0007669"/>
    <property type="project" value="TreeGrafter"/>
</dbReference>
<dbReference type="GO" id="GO:0004096">
    <property type="term" value="F:catalase activity"/>
    <property type="evidence" value="ECO:0007669"/>
    <property type="project" value="UniProtKB-UniRule"/>
</dbReference>
<dbReference type="GO" id="GO:0020037">
    <property type="term" value="F:heme binding"/>
    <property type="evidence" value="ECO:0007669"/>
    <property type="project" value="InterPro"/>
</dbReference>
<dbReference type="GO" id="GO:0046872">
    <property type="term" value="F:metal ion binding"/>
    <property type="evidence" value="ECO:0007669"/>
    <property type="project" value="UniProtKB-KW"/>
</dbReference>
<dbReference type="GO" id="GO:0070301">
    <property type="term" value="P:cellular response to hydrogen peroxide"/>
    <property type="evidence" value="ECO:0007669"/>
    <property type="project" value="TreeGrafter"/>
</dbReference>
<dbReference type="GO" id="GO:0042744">
    <property type="term" value="P:hydrogen peroxide catabolic process"/>
    <property type="evidence" value="ECO:0007669"/>
    <property type="project" value="UniProtKB-KW"/>
</dbReference>
<dbReference type="CDD" id="cd00649">
    <property type="entry name" value="catalase_peroxidase_1"/>
    <property type="match status" value="1"/>
</dbReference>
<dbReference type="CDD" id="cd08200">
    <property type="entry name" value="catalase_peroxidase_2"/>
    <property type="match status" value="1"/>
</dbReference>
<dbReference type="FunFam" id="1.10.420.10:FF:000002">
    <property type="entry name" value="Catalase-peroxidase"/>
    <property type="match status" value="1"/>
</dbReference>
<dbReference type="FunFam" id="1.10.420.10:FF:000004">
    <property type="entry name" value="Catalase-peroxidase"/>
    <property type="match status" value="1"/>
</dbReference>
<dbReference type="FunFam" id="1.10.520.10:FF:000002">
    <property type="entry name" value="Catalase-peroxidase"/>
    <property type="match status" value="1"/>
</dbReference>
<dbReference type="FunFam" id="1.10.520.10:FF:000004">
    <property type="entry name" value="Catalase-peroxidase"/>
    <property type="match status" value="1"/>
</dbReference>
<dbReference type="Gene3D" id="1.10.520.10">
    <property type="match status" value="2"/>
</dbReference>
<dbReference type="Gene3D" id="1.10.420.10">
    <property type="entry name" value="Peroxidase, domain 2"/>
    <property type="match status" value="2"/>
</dbReference>
<dbReference type="HAMAP" id="MF_01961">
    <property type="entry name" value="Catal_peroxid"/>
    <property type="match status" value="1"/>
</dbReference>
<dbReference type="InterPro" id="IPR000763">
    <property type="entry name" value="Catalase_peroxidase"/>
</dbReference>
<dbReference type="InterPro" id="IPR002016">
    <property type="entry name" value="Haem_peroxidase"/>
</dbReference>
<dbReference type="InterPro" id="IPR010255">
    <property type="entry name" value="Haem_peroxidase_sf"/>
</dbReference>
<dbReference type="InterPro" id="IPR019794">
    <property type="entry name" value="Peroxidases_AS"/>
</dbReference>
<dbReference type="InterPro" id="IPR019793">
    <property type="entry name" value="Peroxidases_heam-ligand_BS"/>
</dbReference>
<dbReference type="NCBIfam" id="TIGR00198">
    <property type="entry name" value="cat_per_HPI"/>
    <property type="match status" value="1"/>
</dbReference>
<dbReference type="NCBIfam" id="NF011635">
    <property type="entry name" value="PRK15061.1"/>
    <property type="match status" value="1"/>
</dbReference>
<dbReference type="PANTHER" id="PTHR30555:SF0">
    <property type="entry name" value="CATALASE-PEROXIDASE"/>
    <property type="match status" value="1"/>
</dbReference>
<dbReference type="PANTHER" id="PTHR30555">
    <property type="entry name" value="HYDROPEROXIDASE I, BIFUNCTIONAL CATALASE-PEROXIDASE"/>
    <property type="match status" value="1"/>
</dbReference>
<dbReference type="Pfam" id="PF00141">
    <property type="entry name" value="peroxidase"/>
    <property type="match status" value="2"/>
</dbReference>
<dbReference type="PRINTS" id="PR00460">
    <property type="entry name" value="BPEROXIDASE"/>
</dbReference>
<dbReference type="PRINTS" id="PR00458">
    <property type="entry name" value="PEROXIDASE"/>
</dbReference>
<dbReference type="SUPFAM" id="SSF48113">
    <property type="entry name" value="Heme-dependent peroxidases"/>
    <property type="match status" value="2"/>
</dbReference>
<dbReference type="PROSITE" id="PS00435">
    <property type="entry name" value="PEROXIDASE_1"/>
    <property type="match status" value="1"/>
</dbReference>
<dbReference type="PROSITE" id="PS00436">
    <property type="entry name" value="PEROXIDASE_2"/>
    <property type="match status" value="1"/>
</dbReference>
<dbReference type="PROSITE" id="PS50873">
    <property type="entry name" value="PEROXIDASE_4"/>
    <property type="match status" value="1"/>
</dbReference>
<sequence>MSTESKCPFNHAAGGGTTNRDWWPKQLNLKILHQHSTLSDPMGENFDYAKEFKSLDIEAVKQDLRNVMTQSQDWWPADFGHYGPLFIRMAWHSAGTYRTGDGRGGAGAGQQRFAPLNSWPDNVSLDKARRLIWPVKQKYGRKISWADLIVLTGNVALESMGFKTFGFSGGRADVWEPEEDVYWGSETTWLGGEERYGAQKKMQQPGDGTLVAEPENHANEESRTASGERNLENPLAAVQMGLIYVNPEGPEGVPDPVASARDIRETFGRMAMNDEETVALIAGGHAFGKTHGAGPADNVGPEPEAAGLEEQGLGWRNKFGSGKGGDTITSGLEVTWTSTPTKWSNEYLENLFGFEWELTKSPAGAHQWTPKNGAGAGKIPDAHDPSKRHAPSMLTSDLALRFDPAYEQISRRFLNNPEQLADAFARAWFKLTHRDMGPLARYLGPETPAEELLWQDPIPSVDHALVDDQDVATLKAKILASGLSVSQLVSTAWAAASTFRGSDKRGGANGGRLRLAPQKDWAVNQPEQLAGVLKTLEGIQSEFNAAQSGGKKVSIADLIVLAGNAGVEQAAKNAGQHVTVPFAPGRADASQEQTDVESFSFLEPIADGFRNYQKGHYKVSAESLLVDKAQLLTLTAPEMTVLLGGLRVLNINVGQSKHGVFTDQPGTLTNDFFKNLLDMGVEWKATAGGTDTFEARDRKTGAVKWTGTRVDLVFGSHAQLRAISEVYGSSDAHEKFVKDFVAVWTKVMNLDRFDLA</sequence>
<organism>
    <name type="scientific">Pseudomonas syringae pv. syringae (strain B728a)</name>
    <dbReference type="NCBI Taxonomy" id="205918"/>
    <lineage>
        <taxon>Bacteria</taxon>
        <taxon>Pseudomonadati</taxon>
        <taxon>Pseudomonadota</taxon>
        <taxon>Gammaproteobacteria</taxon>
        <taxon>Pseudomonadales</taxon>
        <taxon>Pseudomonadaceae</taxon>
        <taxon>Pseudomonas</taxon>
        <taxon>Pseudomonas syringae</taxon>
    </lineage>
</organism>
<keyword id="KW-0349">Heme</keyword>
<keyword id="KW-0376">Hydrogen peroxide</keyword>
<keyword id="KW-0408">Iron</keyword>
<keyword id="KW-0479">Metal-binding</keyword>
<keyword id="KW-0560">Oxidoreductase</keyword>
<keyword id="KW-0575">Peroxidase</keyword>
<comment type="function">
    <text evidence="1">Bifunctional enzyme with both catalase and broad-spectrum peroxidase activity.</text>
</comment>
<comment type="catalytic activity">
    <reaction evidence="1">
        <text>H2O2 + AH2 = A + 2 H2O</text>
        <dbReference type="Rhea" id="RHEA:30275"/>
        <dbReference type="ChEBI" id="CHEBI:13193"/>
        <dbReference type="ChEBI" id="CHEBI:15377"/>
        <dbReference type="ChEBI" id="CHEBI:16240"/>
        <dbReference type="ChEBI" id="CHEBI:17499"/>
        <dbReference type="EC" id="1.11.1.21"/>
    </reaction>
</comment>
<comment type="catalytic activity">
    <reaction evidence="1">
        <text>2 H2O2 = O2 + 2 H2O</text>
        <dbReference type="Rhea" id="RHEA:20309"/>
        <dbReference type="ChEBI" id="CHEBI:15377"/>
        <dbReference type="ChEBI" id="CHEBI:15379"/>
        <dbReference type="ChEBI" id="CHEBI:16240"/>
        <dbReference type="EC" id="1.11.1.21"/>
    </reaction>
</comment>
<comment type="cofactor">
    <cofactor evidence="1">
        <name>heme b</name>
        <dbReference type="ChEBI" id="CHEBI:60344"/>
    </cofactor>
    <text evidence="1">Binds 1 heme b (iron(II)-protoporphyrin IX) group per dimer.</text>
</comment>
<comment type="subunit">
    <text evidence="1">Homodimer or homotetramer.</text>
</comment>
<comment type="PTM">
    <text evidence="1">Formation of the three residue Trp-Tyr-Met cross-link is important for the catalase, but not the peroxidase activity of the enzyme.</text>
</comment>
<comment type="similarity">
    <text evidence="1">Belongs to the peroxidase family. Peroxidase/catalase subfamily.</text>
</comment>
<reference key="1">
    <citation type="journal article" date="2005" name="Proc. Natl. Acad. Sci. U.S.A.">
        <title>Comparison of the complete genome sequences of Pseudomonas syringae pv. syringae B728a and pv. tomato DC3000.</title>
        <authorList>
            <person name="Feil H."/>
            <person name="Feil W.S."/>
            <person name="Chain P."/>
            <person name="Larimer F."/>
            <person name="Dibartolo G."/>
            <person name="Copeland A."/>
            <person name="Lykidis A."/>
            <person name="Trong S."/>
            <person name="Nolan M."/>
            <person name="Goltsman E."/>
            <person name="Thiel J."/>
            <person name="Malfatti S."/>
            <person name="Loper J.E."/>
            <person name="Lapidus A."/>
            <person name="Detter J.C."/>
            <person name="Land M."/>
            <person name="Richardson P.M."/>
            <person name="Kyrpides N.C."/>
            <person name="Ivanova N."/>
            <person name="Lindow S.E."/>
        </authorList>
    </citation>
    <scope>NUCLEOTIDE SEQUENCE [LARGE SCALE GENOMIC DNA]</scope>
    <source>
        <strain>B728a</strain>
    </source>
</reference>
<feature type="chain" id="PRO_0000354872" description="Catalase-peroxidase">
    <location>
        <begin position="1"/>
        <end position="756"/>
    </location>
</feature>
<feature type="region of interest" description="Disordered" evidence="2">
    <location>
        <begin position="198"/>
        <end position="230"/>
    </location>
</feature>
<feature type="compositionally biased region" description="Basic and acidic residues" evidence="2">
    <location>
        <begin position="214"/>
        <end position="223"/>
    </location>
</feature>
<feature type="active site" description="Proton acceptor" evidence="1">
    <location>
        <position position="92"/>
    </location>
</feature>
<feature type="binding site" description="axial binding residue" evidence="1">
    <location>
        <position position="285"/>
    </location>
    <ligand>
        <name>heme b</name>
        <dbReference type="ChEBI" id="CHEBI:60344"/>
    </ligand>
    <ligandPart>
        <name>Fe</name>
        <dbReference type="ChEBI" id="CHEBI:18248"/>
    </ligandPart>
</feature>
<feature type="site" description="Transition state stabilizer" evidence="1">
    <location>
        <position position="88"/>
    </location>
</feature>
<feature type="cross-link" description="Tryptophyl-tyrosyl-methioninium (Trp-Tyr) (with M-270)" evidence="1">
    <location>
        <begin position="91"/>
        <end position="244"/>
    </location>
</feature>
<feature type="cross-link" description="Tryptophyl-tyrosyl-methioninium (Tyr-Met) (with W-91)" evidence="1">
    <location>
        <begin position="244"/>
        <end position="270"/>
    </location>
</feature>
<gene>
    <name evidence="1" type="primary">katG</name>
    <name type="ordered locus">Psyr_4208</name>
</gene>
<proteinExistence type="inferred from homology"/>
<evidence type="ECO:0000255" key="1">
    <source>
        <dbReference type="HAMAP-Rule" id="MF_01961"/>
    </source>
</evidence>
<evidence type="ECO:0000256" key="2">
    <source>
        <dbReference type="SAM" id="MobiDB-lite"/>
    </source>
</evidence>
<protein>
    <recommendedName>
        <fullName evidence="1">Catalase-peroxidase</fullName>
        <shortName evidence="1">CP</shortName>
        <ecNumber evidence="1">1.11.1.21</ecNumber>
    </recommendedName>
    <alternativeName>
        <fullName evidence="1">Peroxidase/catalase</fullName>
    </alternativeName>
</protein>
<accession>Q4ZNN4</accession>